<evidence type="ECO:0000255" key="1">
    <source>
        <dbReference type="HAMAP-Rule" id="MF_00185"/>
    </source>
</evidence>
<evidence type="ECO:0000305" key="2"/>
<sequence>MGKPLISILGPTGVGKTDLAFRLACSLDKANILSVDTGSFYKAATIGTAKPPKEFTSRVRHWFIDILECQEVYSVGAFVSDCSSILQDLWAEGVTPIVVAGTLFYYYALVGERSFSAVPSDSTVREKVEEKARVYGEEYLRQELRKVDPEREKNILPGDIRRLTRALEIAELGFKPTEAVVTNKLDFDINLKIGLKMPRDLYRTRLRDRVEYMISAGLIEEVQDILSKTGNSSLPCLNQIGYKEVCSYLKGEIKNKDELVERIFLSHWTYARKQIKWLKKDKTIVWFDVSEKSPDTLVEEVLTLVQSTLENC</sequence>
<feature type="chain" id="PRO_0000377126" description="tRNA dimethylallyltransferase">
    <location>
        <begin position="1"/>
        <end position="312"/>
    </location>
</feature>
<feature type="binding site" evidence="1">
    <location>
        <begin position="10"/>
        <end position="17"/>
    </location>
    <ligand>
        <name>ATP</name>
        <dbReference type="ChEBI" id="CHEBI:30616"/>
    </ligand>
</feature>
<feature type="binding site" evidence="1">
    <location>
        <begin position="12"/>
        <end position="17"/>
    </location>
    <ligand>
        <name>substrate</name>
    </ligand>
</feature>
<feature type="site" description="Interaction with substrate tRNA" evidence="1">
    <location>
        <position position="102"/>
    </location>
</feature>
<feature type="site" description="Interaction with substrate tRNA" evidence="1">
    <location>
        <position position="125"/>
    </location>
</feature>
<gene>
    <name evidence="1" type="primary">miaA</name>
    <name type="ordered locus">COPRO5265_0826</name>
</gene>
<dbReference type="EC" id="2.5.1.75" evidence="1"/>
<dbReference type="EMBL" id="CP001145">
    <property type="protein sequence ID" value="ACI17388.1"/>
    <property type="status" value="ALT_INIT"/>
    <property type="molecule type" value="Genomic_DNA"/>
</dbReference>
<dbReference type="RefSeq" id="WP_041735695.1">
    <property type="nucleotide sequence ID" value="NC_011295.1"/>
</dbReference>
<dbReference type="SMR" id="B5Y8R8"/>
<dbReference type="STRING" id="309798.COPRO5265_0826"/>
<dbReference type="KEGG" id="cpo:COPRO5265_0826"/>
<dbReference type="eggNOG" id="COG0324">
    <property type="taxonomic scope" value="Bacteria"/>
</dbReference>
<dbReference type="OrthoDB" id="9776390at2"/>
<dbReference type="Proteomes" id="UP000001732">
    <property type="component" value="Chromosome"/>
</dbReference>
<dbReference type="GO" id="GO:0005524">
    <property type="term" value="F:ATP binding"/>
    <property type="evidence" value="ECO:0007669"/>
    <property type="project" value="UniProtKB-UniRule"/>
</dbReference>
<dbReference type="GO" id="GO:0052381">
    <property type="term" value="F:tRNA dimethylallyltransferase activity"/>
    <property type="evidence" value="ECO:0007669"/>
    <property type="project" value="UniProtKB-UniRule"/>
</dbReference>
<dbReference type="GO" id="GO:0006400">
    <property type="term" value="P:tRNA modification"/>
    <property type="evidence" value="ECO:0007669"/>
    <property type="project" value="TreeGrafter"/>
</dbReference>
<dbReference type="Gene3D" id="1.10.20.140">
    <property type="match status" value="1"/>
</dbReference>
<dbReference type="Gene3D" id="3.40.50.300">
    <property type="entry name" value="P-loop containing nucleotide triphosphate hydrolases"/>
    <property type="match status" value="1"/>
</dbReference>
<dbReference type="HAMAP" id="MF_00185">
    <property type="entry name" value="IPP_trans"/>
    <property type="match status" value="1"/>
</dbReference>
<dbReference type="InterPro" id="IPR039657">
    <property type="entry name" value="Dimethylallyltransferase"/>
</dbReference>
<dbReference type="InterPro" id="IPR018022">
    <property type="entry name" value="IPT"/>
</dbReference>
<dbReference type="InterPro" id="IPR027417">
    <property type="entry name" value="P-loop_NTPase"/>
</dbReference>
<dbReference type="NCBIfam" id="TIGR00174">
    <property type="entry name" value="miaA"/>
    <property type="match status" value="1"/>
</dbReference>
<dbReference type="PANTHER" id="PTHR11088">
    <property type="entry name" value="TRNA DIMETHYLALLYLTRANSFERASE"/>
    <property type="match status" value="1"/>
</dbReference>
<dbReference type="PANTHER" id="PTHR11088:SF60">
    <property type="entry name" value="TRNA DIMETHYLALLYLTRANSFERASE"/>
    <property type="match status" value="1"/>
</dbReference>
<dbReference type="Pfam" id="PF01715">
    <property type="entry name" value="IPPT"/>
    <property type="match status" value="1"/>
</dbReference>
<dbReference type="SUPFAM" id="SSF52540">
    <property type="entry name" value="P-loop containing nucleoside triphosphate hydrolases"/>
    <property type="match status" value="1"/>
</dbReference>
<comment type="function">
    <text evidence="1">Catalyzes the transfer of a dimethylallyl group onto the adenine at position 37 in tRNAs that read codons beginning with uridine, leading to the formation of N6-(dimethylallyl)adenosine (i(6)A).</text>
</comment>
<comment type="catalytic activity">
    <reaction evidence="1">
        <text>adenosine(37) in tRNA + dimethylallyl diphosphate = N(6)-dimethylallyladenosine(37) in tRNA + diphosphate</text>
        <dbReference type="Rhea" id="RHEA:26482"/>
        <dbReference type="Rhea" id="RHEA-COMP:10162"/>
        <dbReference type="Rhea" id="RHEA-COMP:10375"/>
        <dbReference type="ChEBI" id="CHEBI:33019"/>
        <dbReference type="ChEBI" id="CHEBI:57623"/>
        <dbReference type="ChEBI" id="CHEBI:74411"/>
        <dbReference type="ChEBI" id="CHEBI:74415"/>
        <dbReference type="EC" id="2.5.1.75"/>
    </reaction>
</comment>
<comment type="cofactor">
    <cofactor evidence="1">
        <name>Mg(2+)</name>
        <dbReference type="ChEBI" id="CHEBI:18420"/>
    </cofactor>
</comment>
<comment type="subunit">
    <text evidence="1">Monomer.</text>
</comment>
<comment type="similarity">
    <text evidence="1">Belongs to the IPP transferase family.</text>
</comment>
<comment type="sequence caution" evidence="2">
    <conflict type="erroneous initiation">
        <sequence resource="EMBL-CDS" id="ACI17388"/>
    </conflict>
</comment>
<reference key="1">
    <citation type="submission" date="2008-08" db="EMBL/GenBank/DDBJ databases">
        <title>The complete genome sequence of Coprothermobacter proteolyticus strain ATCC 5245 / DSM 5265 / BT.</title>
        <authorList>
            <person name="Dodson R.J."/>
            <person name="Durkin A.S."/>
            <person name="Wu M."/>
            <person name="Eisen J."/>
            <person name="Sutton G."/>
        </authorList>
    </citation>
    <scope>NUCLEOTIDE SEQUENCE [LARGE SCALE GENOMIC DNA]</scope>
    <source>
        <strain>ATCC 35245 / DSM 5265 / OCM 4 / BT</strain>
    </source>
</reference>
<keyword id="KW-0067">ATP-binding</keyword>
<keyword id="KW-0460">Magnesium</keyword>
<keyword id="KW-0547">Nucleotide-binding</keyword>
<keyword id="KW-1185">Reference proteome</keyword>
<keyword id="KW-0808">Transferase</keyword>
<keyword id="KW-0819">tRNA processing</keyword>
<organism>
    <name type="scientific">Coprothermobacter proteolyticus (strain ATCC 35245 / DSM 5265 / OCM 4 / BT)</name>
    <dbReference type="NCBI Taxonomy" id="309798"/>
    <lineage>
        <taxon>Bacteria</taxon>
        <taxon>Pseudomonadati</taxon>
        <taxon>Coprothermobacterota</taxon>
        <taxon>Coprothermobacteria</taxon>
        <taxon>Coprothermobacterales</taxon>
        <taxon>Coprothermobacteraceae</taxon>
        <taxon>Coprothermobacter</taxon>
    </lineage>
</organism>
<proteinExistence type="inferred from homology"/>
<accession>B5Y8R8</accession>
<name>MIAA_COPPD</name>
<protein>
    <recommendedName>
        <fullName evidence="1">tRNA dimethylallyltransferase</fullName>
        <ecNumber evidence="1">2.5.1.75</ecNumber>
    </recommendedName>
    <alternativeName>
        <fullName evidence="1">Dimethylallyl diphosphate:tRNA dimethylallyltransferase</fullName>
        <shortName evidence="1">DMAPP:tRNA dimethylallyltransferase</shortName>
        <shortName evidence="1">DMATase</shortName>
    </alternativeName>
    <alternativeName>
        <fullName evidence="1">Isopentenyl-diphosphate:tRNA isopentenyltransferase</fullName>
        <shortName evidence="1">IPP transferase</shortName>
        <shortName evidence="1">IPPT</shortName>
        <shortName evidence="1">IPTase</shortName>
    </alternativeName>
</protein>